<reference key="1">
    <citation type="journal article" date="2009" name="J. Bacteriol.">
        <title>Genome sequence of Azotobacter vinelandii, an obligate aerobe specialized to support diverse anaerobic metabolic processes.</title>
        <authorList>
            <person name="Setubal J.C."/>
            <person name="Dos Santos P."/>
            <person name="Goldman B.S."/>
            <person name="Ertesvaag H."/>
            <person name="Espin G."/>
            <person name="Rubio L.M."/>
            <person name="Valla S."/>
            <person name="Almeida N.F."/>
            <person name="Balasubramanian D."/>
            <person name="Cromes L."/>
            <person name="Curatti L."/>
            <person name="Du Z."/>
            <person name="Godsy E."/>
            <person name="Goodner B."/>
            <person name="Hellner-Burris K."/>
            <person name="Hernandez J.A."/>
            <person name="Houmiel K."/>
            <person name="Imperial J."/>
            <person name="Kennedy C."/>
            <person name="Larson T.J."/>
            <person name="Latreille P."/>
            <person name="Ligon L.S."/>
            <person name="Lu J."/>
            <person name="Maerk M."/>
            <person name="Miller N.M."/>
            <person name="Norton S."/>
            <person name="O'Carroll I.P."/>
            <person name="Paulsen I."/>
            <person name="Raulfs E.C."/>
            <person name="Roemer R."/>
            <person name="Rosser J."/>
            <person name="Segura D."/>
            <person name="Slater S."/>
            <person name="Stricklin S.L."/>
            <person name="Studholme D.J."/>
            <person name="Sun J."/>
            <person name="Viana C.J."/>
            <person name="Wallin E."/>
            <person name="Wang B."/>
            <person name="Wheeler C."/>
            <person name="Zhu H."/>
            <person name="Dean D.R."/>
            <person name="Dixon R."/>
            <person name="Wood D."/>
        </authorList>
    </citation>
    <scope>NUCLEOTIDE SEQUENCE [LARGE SCALE GENOMIC DNA]</scope>
    <source>
        <strain>DJ / ATCC BAA-1303</strain>
    </source>
</reference>
<keyword id="KW-0067">ATP-binding</keyword>
<keyword id="KW-0963">Cytoplasm</keyword>
<keyword id="KW-0227">DNA damage</keyword>
<keyword id="KW-0233">DNA recombination</keyword>
<keyword id="KW-0234">DNA repair</keyword>
<keyword id="KW-0238">DNA-binding</keyword>
<keyword id="KW-0547">Nucleotide-binding</keyword>
<keyword id="KW-0742">SOS response</keyword>
<evidence type="ECO:0000255" key="1">
    <source>
        <dbReference type="HAMAP-Rule" id="MF_00268"/>
    </source>
</evidence>
<dbReference type="EMBL" id="CP001157">
    <property type="protein sequence ID" value="ACO79997.1"/>
    <property type="molecule type" value="Genomic_DNA"/>
</dbReference>
<dbReference type="RefSeq" id="WP_012702372.1">
    <property type="nucleotide sequence ID" value="NC_012560.1"/>
</dbReference>
<dbReference type="SMR" id="C1DSQ4"/>
<dbReference type="STRING" id="322710.Avin_38560"/>
<dbReference type="EnsemblBacteria" id="ACO79997">
    <property type="protein sequence ID" value="ACO79997"/>
    <property type="gene ID" value="Avin_38560"/>
</dbReference>
<dbReference type="GeneID" id="88186817"/>
<dbReference type="KEGG" id="avn:Avin_38560"/>
<dbReference type="eggNOG" id="COG0468">
    <property type="taxonomic scope" value="Bacteria"/>
</dbReference>
<dbReference type="HOGENOM" id="CLU_040469_3_2_6"/>
<dbReference type="OrthoDB" id="9776733at2"/>
<dbReference type="Proteomes" id="UP000002424">
    <property type="component" value="Chromosome"/>
</dbReference>
<dbReference type="GO" id="GO:0005829">
    <property type="term" value="C:cytosol"/>
    <property type="evidence" value="ECO:0007669"/>
    <property type="project" value="TreeGrafter"/>
</dbReference>
<dbReference type="GO" id="GO:0005524">
    <property type="term" value="F:ATP binding"/>
    <property type="evidence" value="ECO:0007669"/>
    <property type="project" value="UniProtKB-UniRule"/>
</dbReference>
<dbReference type="GO" id="GO:0016887">
    <property type="term" value="F:ATP hydrolysis activity"/>
    <property type="evidence" value="ECO:0007669"/>
    <property type="project" value="InterPro"/>
</dbReference>
<dbReference type="GO" id="GO:0140664">
    <property type="term" value="F:ATP-dependent DNA damage sensor activity"/>
    <property type="evidence" value="ECO:0007669"/>
    <property type="project" value="InterPro"/>
</dbReference>
<dbReference type="GO" id="GO:0003684">
    <property type="term" value="F:damaged DNA binding"/>
    <property type="evidence" value="ECO:0007669"/>
    <property type="project" value="UniProtKB-UniRule"/>
</dbReference>
<dbReference type="GO" id="GO:0003697">
    <property type="term" value="F:single-stranded DNA binding"/>
    <property type="evidence" value="ECO:0007669"/>
    <property type="project" value="UniProtKB-UniRule"/>
</dbReference>
<dbReference type="GO" id="GO:0006310">
    <property type="term" value="P:DNA recombination"/>
    <property type="evidence" value="ECO:0007669"/>
    <property type="project" value="UniProtKB-UniRule"/>
</dbReference>
<dbReference type="GO" id="GO:0006281">
    <property type="term" value="P:DNA repair"/>
    <property type="evidence" value="ECO:0007669"/>
    <property type="project" value="UniProtKB-UniRule"/>
</dbReference>
<dbReference type="GO" id="GO:0009432">
    <property type="term" value="P:SOS response"/>
    <property type="evidence" value="ECO:0007669"/>
    <property type="project" value="UniProtKB-UniRule"/>
</dbReference>
<dbReference type="CDD" id="cd00983">
    <property type="entry name" value="RecA"/>
    <property type="match status" value="1"/>
</dbReference>
<dbReference type="FunFam" id="3.40.50.300:FF:000087">
    <property type="entry name" value="Recombinase RecA"/>
    <property type="match status" value="1"/>
</dbReference>
<dbReference type="Gene3D" id="3.40.50.300">
    <property type="entry name" value="P-loop containing nucleotide triphosphate hydrolases"/>
    <property type="match status" value="1"/>
</dbReference>
<dbReference type="HAMAP" id="MF_00268">
    <property type="entry name" value="RecA"/>
    <property type="match status" value="1"/>
</dbReference>
<dbReference type="InterPro" id="IPR003593">
    <property type="entry name" value="AAA+_ATPase"/>
</dbReference>
<dbReference type="InterPro" id="IPR013765">
    <property type="entry name" value="DNA_recomb/repair_RecA"/>
</dbReference>
<dbReference type="InterPro" id="IPR020584">
    <property type="entry name" value="DNA_recomb/repair_RecA_CS"/>
</dbReference>
<dbReference type="InterPro" id="IPR027417">
    <property type="entry name" value="P-loop_NTPase"/>
</dbReference>
<dbReference type="InterPro" id="IPR049261">
    <property type="entry name" value="RecA-like_C"/>
</dbReference>
<dbReference type="InterPro" id="IPR049428">
    <property type="entry name" value="RecA-like_N"/>
</dbReference>
<dbReference type="InterPro" id="IPR020588">
    <property type="entry name" value="RecA_ATP-bd"/>
</dbReference>
<dbReference type="InterPro" id="IPR023400">
    <property type="entry name" value="RecA_C_sf"/>
</dbReference>
<dbReference type="InterPro" id="IPR020587">
    <property type="entry name" value="RecA_monomer-monomer_interface"/>
</dbReference>
<dbReference type="NCBIfam" id="TIGR02012">
    <property type="entry name" value="tigrfam_recA"/>
    <property type="match status" value="1"/>
</dbReference>
<dbReference type="PANTHER" id="PTHR45900:SF1">
    <property type="entry name" value="MITOCHONDRIAL DNA REPAIR PROTEIN RECA HOMOLOG-RELATED"/>
    <property type="match status" value="1"/>
</dbReference>
<dbReference type="PANTHER" id="PTHR45900">
    <property type="entry name" value="RECA"/>
    <property type="match status" value="1"/>
</dbReference>
<dbReference type="Pfam" id="PF00154">
    <property type="entry name" value="RecA"/>
    <property type="match status" value="1"/>
</dbReference>
<dbReference type="Pfam" id="PF21096">
    <property type="entry name" value="RecA_C"/>
    <property type="match status" value="1"/>
</dbReference>
<dbReference type="PRINTS" id="PR00142">
    <property type="entry name" value="RECA"/>
</dbReference>
<dbReference type="SMART" id="SM00382">
    <property type="entry name" value="AAA"/>
    <property type="match status" value="1"/>
</dbReference>
<dbReference type="SUPFAM" id="SSF52540">
    <property type="entry name" value="P-loop containing nucleoside triphosphate hydrolases"/>
    <property type="match status" value="1"/>
</dbReference>
<dbReference type="SUPFAM" id="SSF54752">
    <property type="entry name" value="RecA protein, C-terminal domain"/>
    <property type="match status" value="1"/>
</dbReference>
<dbReference type="PROSITE" id="PS00321">
    <property type="entry name" value="RECA_1"/>
    <property type="match status" value="1"/>
</dbReference>
<dbReference type="PROSITE" id="PS50162">
    <property type="entry name" value="RECA_2"/>
    <property type="match status" value="1"/>
</dbReference>
<dbReference type="PROSITE" id="PS50163">
    <property type="entry name" value="RECA_3"/>
    <property type="match status" value="1"/>
</dbReference>
<organism>
    <name type="scientific">Azotobacter vinelandii (strain DJ / ATCC BAA-1303)</name>
    <dbReference type="NCBI Taxonomy" id="322710"/>
    <lineage>
        <taxon>Bacteria</taxon>
        <taxon>Pseudomonadati</taxon>
        <taxon>Pseudomonadota</taxon>
        <taxon>Gammaproteobacteria</taxon>
        <taxon>Pseudomonadales</taxon>
        <taxon>Pseudomonadaceae</taxon>
        <taxon>Azotobacter</taxon>
    </lineage>
</organism>
<sequence>MDENKKRALAAALGQIEKQFGKGAVMRMGDHERQAIPAISTGSLGLDIALGIGGLPKGRIVEIYGPESSGKTTLTLSTIAEAQKQGATCAFVDAEHALDPDYAAKLGVNVDDLLVSQPDTGEQALEITDMLVRSNAVDVIIVDSVAALVPKAEIEGEMGDQHVGLQARLMSQALRKITGNIKNANCLVIFINQIRMKIGVMFGNPETTTGGNALKFYASVRLDIRRTGAVKESDEVIGSETRVKVVKNKVAPPFRQAEFQILYGKGIYRNGEIIDLGVQLGLLEKSGAWYSYQGSKIGQGKANAAKFLEDNPEVAAAVEKSIRDQLLAAPASARPAALADEPADADLDY</sequence>
<protein>
    <recommendedName>
        <fullName evidence="1">Protein RecA</fullName>
    </recommendedName>
    <alternativeName>
        <fullName evidence="1">Recombinase A</fullName>
    </alternativeName>
</protein>
<gene>
    <name evidence="1" type="primary">recA</name>
    <name type="ordered locus">Avin_38560</name>
</gene>
<accession>C1DSQ4</accession>
<feature type="chain" id="PRO_1000204702" description="Protein RecA">
    <location>
        <begin position="1"/>
        <end position="349"/>
    </location>
</feature>
<feature type="binding site" evidence="1">
    <location>
        <begin position="65"/>
        <end position="72"/>
    </location>
    <ligand>
        <name>ATP</name>
        <dbReference type="ChEBI" id="CHEBI:30616"/>
    </ligand>
</feature>
<proteinExistence type="inferred from homology"/>
<name>RECA_AZOVD</name>
<comment type="function">
    <text evidence="1">Can catalyze the hydrolysis of ATP in the presence of single-stranded DNA, the ATP-dependent uptake of single-stranded DNA by duplex DNA, and the ATP-dependent hybridization of homologous single-stranded DNAs. It interacts with LexA causing its activation and leading to its autocatalytic cleavage.</text>
</comment>
<comment type="subcellular location">
    <subcellularLocation>
        <location evidence="1">Cytoplasm</location>
    </subcellularLocation>
</comment>
<comment type="similarity">
    <text evidence="1">Belongs to the RecA family.</text>
</comment>